<protein>
    <recommendedName>
        <fullName evidence="4">Pyrokinin-4</fullName>
        <shortName evidence="4">PK-4</shortName>
    </recommendedName>
</protein>
<feature type="peptide" id="PRO_0000421609" description="Pyrokinin-4" evidence="3">
    <location>
        <begin position="1"/>
        <end position="13"/>
    </location>
</feature>
<feature type="modified residue" description="Leucine amide" evidence="3">
    <location>
        <position position="13"/>
    </location>
</feature>
<proteinExistence type="evidence at protein level"/>
<sequence length="13" mass="1535">AELPQGLWVRPRL</sequence>
<keyword id="KW-0027">Amidation</keyword>
<keyword id="KW-0903">Direct protein sequencing</keyword>
<keyword id="KW-0527">Neuropeptide</keyword>
<keyword id="KW-0964">Secreted</keyword>
<comment type="function">
    <text evidence="1">Myoactive.</text>
</comment>
<comment type="subcellular location">
    <subcellularLocation>
        <location evidence="6">Secreted</location>
    </subcellularLocation>
</comment>
<comment type="similarity">
    <text evidence="2">Belongs to the pyrokinin family.</text>
</comment>
<evidence type="ECO:0000250" key="1">
    <source>
        <dbReference type="UniProtKB" id="P82619"/>
    </source>
</evidence>
<evidence type="ECO:0000255" key="2"/>
<evidence type="ECO:0000269" key="3">
    <source>
    </source>
</evidence>
<evidence type="ECO:0000303" key="4">
    <source>
    </source>
</evidence>
<evidence type="ECO:0000305" key="5"/>
<evidence type="ECO:0000305" key="6">
    <source>
    </source>
</evidence>
<name>PPK4_TYRGL</name>
<dbReference type="GO" id="GO:0005576">
    <property type="term" value="C:extracellular region"/>
    <property type="evidence" value="ECO:0007669"/>
    <property type="project" value="UniProtKB-SubCell"/>
</dbReference>
<dbReference type="GO" id="GO:0007218">
    <property type="term" value="P:neuropeptide signaling pathway"/>
    <property type="evidence" value="ECO:0007669"/>
    <property type="project" value="UniProtKB-KW"/>
</dbReference>
<organism>
    <name type="scientific">Tyrannophasma gladiator</name>
    <name type="common">Gladiator</name>
    <name type="synonym">Heel-walker</name>
    <dbReference type="NCBI Taxonomy" id="270861"/>
    <lineage>
        <taxon>Eukaryota</taxon>
        <taxon>Metazoa</taxon>
        <taxon>Ecdysozoa</taxon>
        <taxon>Arthropoda</taxon>
        <taxon>Hexapoda</taxon>
        <taxon>Insecta</taxon>
        <taxon>Pterygota</taxon>
        <taxon>Neoptera</taxon>
        <taxon>Polyneoptera</taxon>
        <taxon>Mantophasmatodea</taxon>
        <taxon>Mantophasmatodea incertae sedis</taxon>
        <taxon>Tyrannophasma</taxon>
    </lineage>
</organism>
<reference evidence="5" key="1">
    <citation type="journal article" date="2012" name="Syst. Biol.">
        <title>Peptidomics-based phylogeny and biogeography of Mantophasmatodea (Hexapoda).</title>
        <authorList>
            <person name="Predel R."/>
            <person name="Neupert S."/>
            <person name="Huetteroth W."/>
            <person name="Kahnt J."/>
            <person name="Waidelich D."/>
            <person name="Roth S."/>
        </authorList>
    </citation>
    <scope>PROTEIN SEQUENCE</scope>
    <scope>AMIDATION AT LEU-13</scope>
    <source>
        <tissue evidence="3">Corpora cardiaca</tissue>
    </source>
</reference>
<accession>B3A0I9</accession>